<sequence length="303" mass="34749">MALAPTSSAISGSLRSSMLKLLMRLKSRTLATRLRLYEIIIEMQELGITRNEREIFYMDVNVFRTQSVVRRLVSSIASELQISKHDLGVRNTLKGIFIGRLGFVRHHGLGMVEMSSKGGCPQLIPDMSDIAEVLCDYKKTVVVEKDTVLQRIASEIEREKCLEEILFVCGKGYPCKNTVLLLKMIEHKTAVAGLFDLDPFGIHIFCIYKYGSKETPDIRVETIMRIGVCMEDVLEKNAYKDVFVKLNVHDLKMINRLVRFGELSADLLFLRKIDGKVEMEALFSKEPRRLRYFLFRMLERISS</sequence>
<gene>
    <name type="primary">SPO11</name>
    <name type="ordered locus">ECU04_1110</name>
</gene>
<accession>Q8SVS9</accession>
<proteinExistence type="inferred from homology"/>
<reference key="1">
    <citation type="journal article" date="2001" name="Nature">
        <title>Genome sequence and gene compaction of the eukaryote parasite Encephalitozoon cuniculi.</title>
        <authorList>
            <person name="Katinka M.D."/>
            <person name="Duprat S."/>
            <person name="Cornillot E."/>
            <person name="Metenier G."/>
            <person name="Thomarat F."/>
            <person name="Prensier G."/>
            <person name="Barbe V."/>
            <person name="Peyretaillade E."/>
            <person name="Brottier P."/>
            <person name="Wincker P."/>
            <person name="Delbac F."/>
            <person name="El Alaoui H."/>
            <person name="Peyret P."/>
            <person name="Saurin W."/>
            <person name="Gouy M."/>
            <person name="Weissenbach J."/>
            <person name="Vivares C.P."/>
        </authorList>
    </citation>
    <scope>NUCLEOTIDE SEQUENCE [LARGE SCALE GENOMIC DNA]</scope>
    <source>
        <strain>GB-M1</strain>
    </source>
</reference>
<dbReference type="EC" id="5.6.2.2" evidence="4"/>
<dbReference type="EMBL" id="AL590444">
    <property type="protein sequence ID" value="CAD25299.1"/>
    <property type="molecule type" value="Genomic_DNA"/>
</dbReference>
<dbReference type="RefSeq" id="NP_584795.1">
    <property type="nucleotide sequence ID" value="NM_001041145.1"/>
</dbReference>
<dbReference type="SMR" id="Q8SVS9"/>
<dbReference type="FunCoup" id="Q8SVS9">
    <property type="interactions" value="39"/>
</dbReference>
<dbReference type="STRING" id="284813.Q8SVS9"/>
<dbReference type="GeneID" id="858943"/>
<dbReference type="KEGG" id="ecu:ECU04_1110"/>
<dbReference type="VEuPathDB" id="MicrosporidiaDB:ECU04_1110"/>
<dbReference type="HOGENOM" id="CLU_037229_4_0_1"/>
<dbReference type="InParanoid" id="Q8SVS9"/>
<dbReference type="OMA" id="MEIEIFT"/>
<dbReference type="OrthoDB" id="5377392at2759"/>
<dbReference type="Proteomes" id="UP000000819">
    <property type="component" value="Chromosome IV"/>
</dbReference>
<dbReference type="GO" id="GO:0000228">
    <property type="term" value="C:nuclear chromosome"/>
    <property type="evidence" value="ECO:0007669"/>
    <property type="project" value="TreeGrafter"/>
</dbReference>
<dbReference type="GO" id="GO:0005524">
    <property type="term" value="F:ATP binding"/>
    <property type="evidence" value="ECO:0007669"/>
    <property type="project" value="InterPro"/>
</dbReference>
<dbReference type="GO" id="GO:0003677">
    <property type="term" value="F:DNA binding"/>
    <property type="evidence" value="ECO:0007669"/>
    <property type="project" value="UniProtKB-KW"/>
</dbReference>
<dbReference type="GO" id="GO:0003918">
    <property type="term" value="F:DNA topoisomerase type II (double strand cut, ATP-hydrolyzing) activity"/>
    <property type="evidence" value="ECO:0007669"/>
    <property type="project" value="InterPro"/>
</dbReference>
<dbReference type="GO" id="GO:0046872">
    <property type="term" value="F:metal ion binding"/>
    <property type="evidence" value="ECO:0007669"/>
    <property type="project" value="UniProtKB-KW"/>
</dbReference>
<dbReference type="GO" id="GO:0042138">
    <property type="term" value="P:meiotic DNA double-strand break formation"/>
    <property type="evidence" value="ECO:0007669"/>
    <property type="project" value="TreeGrafter"/>
</dbReference>
<dbReference type="GO" id="GO:0000706">
    <property type="term" value="P:meiotic DNA double-strand break processing"/>
    <property type="evidence" value="ECO:0007669"/>
    <property type="project" value="TreeGrafter"/>
</dbReference>
<dbReference type="GO" id="GO:0007131">
    <property type="term" value="P:reciprocal meiotic recombination"/>
    <property type="evidence" value="ECO:0007669"/>
    <property type="project" value="TreeGrafter"/>
</dbReference>
<dbReference type="GO" id="GO:0030435">
    <property type="term" value="P:sporulation resulting in formation of a cellular spore"/>
    <property type="evidence" value="ECO:0007669"/>
    <property type="project" value="UniProtKB-KW"/>
</dbReference>
<dbReference type="CDD" id="cd00223">
    <property type="entry name" value="TOPRIM_TopoIIB_SPO"/>
    <property type="match status" value="1"/>
</dbReference>
<dbReference type="Gene3D" id="3.40.1360.10">
    <property type="match status" value="1"/>
</dbReference>
<dbReference type="Gene3D" id="1.10.10.10">
    <property type="entry name" value="Winged helix-like DNA-binding domain superfamily/Winged helix DNA-binding domain"/>
    <property type="match status" value="1"/>
</dbReference>
<dbReference type="InterPro" id="IPR002815">
    <property type="entry name" value="Spo11/TopoVI_A"/>
</dbReference>
<dbReference type="InterPro" id="IPR013049">
    <property type="entry name" value="Spo11/TopoVI_A_N"/>
</dbReference>
<dbReference type="InterPro" id="IPR036078">
    <property type="entry name" value="Spo11/TopoVI_A_sf"/>
</dbReference>
<dbReference type="InterPro" id="IPR034136">
    <property type="entry name" value="TOPRIM_Topo6A/Spo11"/>
</dbReference>
<dbReference type="InterPro" id="IPR036388">
    <property type="entry name" value="WH-like_DNA-bd_sf"/>
</dbReference>
<dbReference type="PANTHER" id="PTHR10848">
    <property type="entry name" value="MEIOTIC RECOMBINATION PROTEIN SPO11"/>
    <property type="match status" value="1"/>
</dbReference>
<dbReference type="PANTHER" id="PTHR10848:SF0">
    <property type="entry name" value="MEIOTIC RECOMBINATION PROTEIN SPO11"/>
    <property type="match status" value="1"/>
</dbReference>
<dbReference type="Pfam" id="PF21180">
    <property type="entry name" value="TOP6A-Spo11_Toprim"/>
    <property type="match status" value="1"/>
</dbReference>
<dbReference type="Pfam" id="PF04406">
    <property type="entry name" value="TP6A_N"/>
    <property type="match status" value="1"/>
</dbReference>
<dbReference type="PRINTS" id="PR01550">
    <property type="entry name" value="TOP6AFAMILY"/>
</dbReference>
<dbReference type="SUPFAM" id="SSF56726">
    <property type="entry name" value="DNA topoisomerase IV, alpha subunit"/>
    <property type="match status" value="1"/>
</dbReference>
<dbReference type="PROSITE" id="PS52041">
    <property type="entry name" value="TOPO_IIB"/>
    <property type="match status" value="1"/>
</dbReference>
<protein>
    <recommendedName>
        <fullName>Probable meiosis-specific protein SPO11 homolog</fullName>
        <ecNumber evidence="4">5.6.2.2</ecNumber>
    </recommendedName>
</protein>
<comment type="function">
    <text evidence="1">Required for meiotic recombination. Mediates DNA cleavage that forms the double-strand breaks (DSB) that initiate meiotic recombination (By similarity).</text>
</comment>
<comment type="catalytic activity">
    <reaction evidence="3 4">
        <text>ATP-dependent breakage, passage and rejoining of double-stranded DNA.</text>
        <dbReference type="EC" id="5.6.2.2"/>
    </reaction>
</comment>
<comment type="cofactor">
    <cofactor evidence="2">
        <name>Mg(2+)</name>
        <dbReference type="ChEBI" id="CHEBI:18420"/>
    </cofactor>
</comment>
<comment type="subcellular location">
    <subcellularLocation>
        <location evidence="1">Nucleus</location>
    </subcellularLocation>
</comment>
<comment type="similarity">
    <text evidence="4">Belongs to the TOP6A family.</text>
</comment>
<evidence type="ECO:0000250" key="1"/>
<evidence type="ECO:0000250" key="2">
    <source>
        <dbReference type="UniProtKB" id="Q57815"/>
    </source>
</evidence>
<evidence type="ECO:0000255" key="3">
    <source>
        <dbReference type="PROSITE-ProRule" id="PRU01385"/>
    </source>
</evidence>
<evidence type="ECO:0000305" key="4"/>
<organism>
    <name type="scientific">Encephalitozoon cuniculi (strain GB-M1)</name>
    <name type="common">Microsporidian parasite</name>
    <dbReference type="NCBI Taxonomy" id="284813"/>
    <lineage>
        <taxon>Eukaryota</taxon>
        <taxon>Fungi</taxon>
        <taxon>Fungi incertae sedis</taxon>
        <taxon>Microsporidia</taxon>
        <taxon>Unikaryonidae</taxon>
        <taxon>Encephalitozoon</taxon>
    </lineage>
</organism>
<keyword id="KW-0238">DNA-binding</keyword>
<keyword id="KW-0413">Isomerase</keyword>
<keyword id="KW-0460">Magnesium</keyword>
<keyword id="KW-0469">Meiosis</keyword>
<keyword id="KW-0479">Metal-binding</keyword>
<keyword id="KW-0539">Nucleus</keyword>
<keyword id="KW-1185">Reference proteome</keyword>
<keyword id="KW-0749">Sporulation</keyword>
<keyword id="KW-0799">Topoisomerase</keyword>
<name>SPO11_ENCCU</name>
<feature type="chain" id="PRO_0000388416" description="Probable meiosis-specific protein SPO11 homolog">
    <location>
        <begin position="1"/>
        <end position="303"/>
    </location>
</feature>
<feature type="domain" description="Topo IIA-type catalytic" evidence="3">
    <location>
        <begin position="1"/>
        <end position="96"/>
    </location>
</feature>
<feature type="active site" description="O-(5'-phospho-DNA)-tyrosine intermediate" evidence="3">
    <location>
        <position position="57"/>
    </location>
</feature>
<feature type="binding site" evidence="2">
    <location>
        <position position="144"/>
    </location>
    <ligand>
        <name>Mg(2+)</name>
        <dbReference type="ChEBI" id="CHEBI:18420"/>
    </ligand>
</feature>
<feature type="binding site" evidence="2">
    <location>
        <position position="196"/>
    </location>
    <ligand>
        <name>Mg(2+)</name>
        <dbReference type="ChEBI" id="CHEBI:18420"/>
    </ligand>
</feature>